<sequence>MPKPVIAIVGRPNVGKSTIFNRIVGERVSIVEDIPGVTRDRIYSAGEWLNHEFNIIDTGGIDIGDEPFLTQIRQQAEVAIDEADVIIFMTNGRDGVTAADEEVAKILYRSNKPVVLAVNKVDNPEMRSDIYDFYALGFGEPFPISGTHGLGLGDLLDEAAQHFPKIEEDGYDEDTIRFSLIGRPNVGKSSLVNALLGQERVIVSNVAGTTRDAVDTPYSKDGKDYVIIDTAGMRKKGKVYESTEKYSVLRALRAIERSDVVLVVLDGEEGIIEQDKKIAGYAHDSGRAVVIVVNKWDAVKKDEKTMKAFEENIRAHFQFLEYAPIVFLSAKTRKRTQTLIPVIDEVNESHSIRIQTNVLNDVIMDAVAMNPTPTHNGSRLKIFYATQVAVKPPTFVVFVNDPELLHFSYERFLKNRLRESFGFVGTPIHIIARARD</sequence>
<feature type="chain" id="PRO_1000011561" description="GTPase Der">
    <location>
        <begin position="1"/>
        <end position="436"/>
    </location>
</feature>
<feature type="domain" description="EngA-type G 1">
    <location>
        <begin position="4"/>
        <end position="167"/>
    </location>
</feature>
<feature type="domain" description="EngA-type G 2">
    <location>
        <begin position="176"/>
        <end position="351"/>
    </location>
</feature>
<feature type="domain" description="KH-like" evidence="1">
    <location>
        <begin position="352"/>
        <end position="436"/>
    </location>
</feature>
<feature type="binding site" evidence="1">
    <location>
        <begin position="10"/>
        <end position="17"/>
    </location>
    <ligand>
        <name>GTP</name>
        <dbReference type="ChEBI" id="CHEBI:37565"/>
        <label>1</label>
    </ligand>
</feature>
<feature type="binding site" evidence="1">
    <location>
        <begin position="57"/>
        <end position="61"/>
    </location>
    <ligand>
        <name>GTP</name>
        <dbReference type="ChEBI" id="CHEBI:37565"/>
        <label>1</label>
    </ligand>
</feature>
<feature type="binding site" evidence="1">
    <location>
        <begin position="119"/>
        <end position="122"/>
    </location>
    <ligand>
        <name>GTP</name>
        <dbReference type="ChEBI" id="CHEBI:37565"/>
        <label>1</label>
    </ligand>
</feature>
<feature type="binding site" evidence="1">
    <location>
        <begin position="182"/>
        <end position="189"/>
    </location>
    <ligand>
        <name>GTP</name>
        <dbReference type="ChEBI" id="CHEBI:37565"/>
        <label>2</label>
    </ligand>
</feature>
<feature type="binding site" evidence="1">
    <location>
        <begin position="229"/>
        <end position="233"/>
    </location>
    <ligand>
        <name>GTP</name>
        <dbReference type="ChEBI" id="CHEBI:37565"/>
        <label>2</label>
    </ligand>
</feature>
<feature type="binding site" evidence="1">
    <location>
        <begin position="294"/>
        <end position="297"/>
    </location>
    <ligand>
        <name>GTP</name>
        <dbReference type="ChEBI" id="CHEBI:37565"/>
        <label>2</label>
    </ligand>
</feature>
<evidence type="ECO:0000255" key="1">
    <source>
        <dbReference type="HAMAP-Rule" id="MF_00195"/>
    </source>
</evidence>
<keyword id="KW-0342">GTP-binding</keyword>
<keyword id="KW-0547">Nucleotide-binding</keyword>
<keyword id="KW-0677">Repeat</keyword>
<keyword id="KW-0690">Ribosome biogenesis</keyword>
<proteinExistence type="inferred from homology"/>
<comment type="function">
    <text evidence="1">GTPase that plays an essential role in the late steps of ribosome biogenesis.</text>
</comment>
<comment type="subunit">
    <text evidence="1">Associates with the 50S ribosomal subunit.</text>
</comment>
<comment type="similarity">
    <text evidence="1">Belongs to the TRAFAC class TrmE-Era-EngA-EngB-Septin-like GTPase superfamily. EngA (Der) GTPase family.</text>
</comment>
<dbReference type="EMBL" id="CP000001">
    <property type="protein sequence ID" value="AAU18863.1"/>
    <property type="molecule type" value="Genomic_DNA"/>
</dbReference>
<dbReference type="RefSeq" id="WP_001125893.1">
    <property type="nucleotide sequence ID" value="NZ_CP009968.1"/>
</dbReference>
<dbReference type="SMR" id="Q63DM8"/>
<dbReference type="GeneID" id="93009536"/>
<dbReference type="KEGG" id="bcz:BCE33L1386"/>
<dbReference type="PATRIC" id="fig|288681.22.peg.4166"/>
<dbReference type="Proteomes" id="UP000002612">
    <property type="component" value="Chromosome"/>
</dbReference>
<dbReference type="GO" id="GO:0005525">
    <property type="term" value="F:GTP binding"/>
    <property type="evidence" value="ECO:0007669"/>
    <property type="project" value="UniProtKB-UniRule"/>
</dbReference>
<dbReference type="GO" id="GO:0043022">
    <property type="term" value="F:ribosome binding"/>
    <property type="evidence" value="ECO:0007669"/>
    <property type="project" value="TreeGrafter"/>
</dbReference>
<dbReference type="GO" id="GO:0042254">
    <property type="term" value="P:ribosome biogenesis"/>
    <property type="evidence" value="ECO:0007669"/>
    <property type="project" value="UniProtKB-KW"/>
</dbReference>
<dbReference type="CDD" id="cd01894">
    <property type="entry name" value="EngA1"/>
    <property type="match status" value="1"/>
</dbReference>
<dbReference type="CDD" id="cd01895">
    <property type="entry name" value="EngA2"/>
    <property type="match status" value="1"/>
</dbReference>
<dbReference type="FunFam" id="3.30.300.20:FF:000004">
    <property type="entry name" value="GTPase Der"/>
    <property type="match status" value="1"/>
</dbReference>
<dbReference type="FunFam" id="3.40.50.300:FF:000040">
    <property type="entry name" value="GTPase Der"/>
    <property type="match status" value="1"/>
</dbReference>
<dbReference type="FunFam" id="3.40.50.300:FF:000057">
    <property type="entry name" value="GTPase Der"/>
    <property type="match status" value="1"/>
</dbReference>
<dbReference type="Gene3D" id="3.30.300.20">
    <property type="match status" value="1"/>
</dbReference>
<dbReference type="Gene3D" id="3.40.50.300">
    <property type="entry name" value="P-loop containing nucleotide triphosphate hydrolases"/>
    <property type="match status" value="2"/>
</dbReference>
<dbReference type="HAMAP" id="MF_00195">
    <property type="entry name" value="GTPase_Der"/>
    <property type="match status" value="1"/>
</dbReference>
<dbReference type="InterPro" id="IPR031166">
    <property type="entry name" value="G_ENGA"/>
</dbReference>
<dbReference type="InterPro" id="IPR006073">
    <property type="entry name" value="GTP-bd"/>
</dbReference>
<dbReference type="InterPro" id="IPR016484">
    <property type="entry name" value="GTPase_Der"/>
</dbReference>
<dbReference type="InterPro" id="IPR032859">
    <property type="entry name" value="KH_dom-like"/>
</dbReference>
<dbReference type="InterPro" id="IPR015946">
    <property type="entry name" value="KH_dom-like_a/b"/>
</dbReference>
<dbReference type="InterPro" id="IPR027417">
    <property type="entry name" value="P-loop_NTPase"/>
</dbReference>
<dbReference type="InterPro" id="IPR005225">
    <property type="entry name" value="Small_GTP-bd"/>
</dbReference>
<dbReference type="NCBIfam" id="TIGR03594">
    <property type="entry name" value="GTPase_EngA"/>
    <property type="match status" value="1"/>
</dbReference>
<dbReference type="NCBIfam" id="TIGR00231">
    <property type="entry name" value="small_GTP"/>
    <property type="match status" value="2"/>
</dbReference>
<dbReference type="PANTHER" id="PTHR43834">
    <property type="entry name" value="GTPASE DER"/>
    <property type="match status" value="1"/>
</dbReference>
<dbReference type="PANTHER" id="PTHR43834:SF6">
    <property type="entry name" value="GTPASE DER"/>
    <property type="match status" value="1"/>
</dbReference>
<dbReference type="Pfam" id="PF14714">
    <property type="entry name" value="KH_dom-like"/>
    <property type="match status" value="1"/>
</dbReference>
<dbReference type="Pfam" id="PF01926">
    <property type="entry name" value="MMR_HSR1"/>
    <property type="match status" value="2"/>
</dbReference>
<dbReference type="PIRSF" id="PIRSF006485">
    <property type="entry name" value="GTP-binding_EngA"/>
    <property type="match status" value="1"/>
</dbReference>
<dbReference type="PRINTS" id="PR00326">
    <property type="entry name" value="GTP1OBG"/>
</dbReference>
<dbReference type="SUPFAM" id="SSF52540">
    <property type="entry name" value="P-loop containing nucleoside triphosphate hydrolases"/>
    <property type="match status" value="2"/>
</dbReference>
<dbReference type="PROSITE" id="PS51712">
    <property type="entry name" value="G_ENGA"/>
    <property type="match status" value="2"/>
</dbReference>
<reference key="1">
    <citation type="journal article" date="2006" name="J. Bacteriol.">
        <title>Pathogenomic sequence analysis of Bacillus cereus and Bacillus thuringiensis isolates closely related to Bacillus anthracis.</title>
        <authorList>
            <person name="Han C.S."/>
            <person name="Xie G."/>
            <person name="Challacombe J.F."/>
            <person name="Altherr M.R."/>
            <person name="Bhotika S.S."/>
            <person name="Bruce D."/>
            <person name="Campbell C.S."/>
            <person name="Campbell M.L."/>
            <person name="Chen J."/>
            <person name="Chertkov O."/>
            <person name="Cleland C."/>
            <person name="Dimitrijevic M."/>
            <person name="Doggett N.A."/>
            <person name="Fawcett J.J."/>
            <person name="Glavina T."/>
            <person name="Goodwin L.A."/>
            <person name="Hill K.K."/>
            <person name="Hitchcock P."/>
            <person name="Jackson P.J."/>
            <person name="Keim P."/>
            <person name="Kewalramani A.R."/>
            <person name="Longmire J."/>
            <person name="Lucas S."/>
            <person name="Malfatti S."/>
            <person name="McMurry K."/>
            <person name="Meincke L.J."/>
            <person name="Misra M."/>
            <person name="Moseman B.L."/>
            <person name="Mundt M."/>
            <person name="Munk A.C."/>
            <person name="Okinaka R.T."/>
            <person name="Parson-Quintana B."/>
            <person name="Reilly L.P."/>
            <person name="Richardson P."/>
            <person name="Robinson D.L."/>
            <person name="Rubin E."/>
            <person name="Saunders E."/>
            <person name="Tapia R."/>
            <person name="Tesmer J.G."/>
            <person name="Thayer N."/>
            <person name="Thompson L.S."/>
            <person name="Tice H."/>
            <person name="Ticknor L.O."/>
            <person name="Wills P.L."/>
            <person name="Brettin T.S."/>
            <person name="Gilna P."/>
        </authorList>
    </citation>
    <scope>NUCLEOTIDE SEQUENCE [LARGE SCALE GENOMIC DNA]</scope>
    <source>
        <strain>ZK / E33L</strain>
    </source>
</reference>
<protein>
    <recommendedName>
        <fullName evidence="1">GTPase Der</fullName>
    </recommendedName>
    <alternativeName>
        <fullName evidence="1">GTP-binding protein EngA</fullName>
    </alternativeName>
</protein>
<gene>
    <name evidence="1" type="primary">der</name>
    <name type="synonym">engA</name>
    <name type="ordered locus">BCE33L1386</name>
</gene>
<accession>Q63DM8</accession>
<organism>
    <name type="scientific">Bacillus cereus (strain ZK / E33L)</name>
    <dbReference type="NCBI Taxonomy" id="288681"/>
    <lineage>
        <taxon>Bacteria</taxon>
        <taxon>Bacillati</taxon>
        <taxon>Bacillota</taxon>
        <taxon>Bacilli</taxon>
        <taxon>Bacillales</taxon>
        <taxon>Bacillaceae</taxon>
        <taxon>Bacillus</taxon>
        <taxon>Bacillus cereus group</taxon>
    </lineage>
</organism>
<name>DER_BACCZ</name>